<comment type="function">
    <text>Involved in determining the orientation of cell expansion, probably by playing an important role in cellulose deposition. May act by recruiting cellulose synthesizing complexes to discrete positions on the cell surface.</text>
</comment>
<comment type="subcellular location">
    <subcellularLocation>
        <location evidence="5">Lateral cell membrane</location>
        <topology evidence="5">Lipid-anchor</topology>
        <topology evidence="5">GPI-anchor</topology>
        <orientation evidence="5">Extracellular side</orientation>
    </subcellularLocation>
    <text>Located on the longitudinal sides of the cell rather than on the apical or basal sides.</text>
</comment>
<comment type="tissue specificity">
    <text evidence="2 3">Expressed in roots, stems, leaves, flowers and siliques. Up-regulated in the root zone of rapid longitudinal expansion.</text>
</comment>
<comment type="miscellaneous">
    <text>A partial protein missing the N-terminal signal peptide was reported to complement a yeast mutant defective in phytochelatin synthesis. It is therefore possible that COBRA binds divalent metals.</text>
</comment>
<comment type="similarity">
    <text evidence="4">Belongs to the COBRA family.</text>
</comment>
<comment type="sequence caution" evidence="4">
    <conflict type="erroneous gene model prediction">
        <sequence resource="EMBL-CDS" id="BAB10641"/>
    </conflict>
</comment>
<comment type="sequence caution" evidence="4">
    <conflict type="erroneous initiation">
        <sequence resource="EMBL-CDS" id="CAA07251"/>
    </conflict>
</comment>
<sequence>MESFFSRSTSIVSKLSFLALWIVFLISSSSFTSTEAYDALDPEGNITMKWDVMSWTPDGYVAVVTMFNFQKYRHIQSPGWTLGWKWAKKEVIWSMVGAQTTEQGDCSKYKGNIPHCCKKDPTVVDLLPGTPYNQQIANCCKGGVMNSWVQDPATAASSFQISVGAAGTTNKTVRVPRNFTLMGPGPGYTCGPAKIVRPTKFVTTDTRRTTQAMMTWNITCTYSQFLAQRTPTCCVSLSSFYNETIVGCPTCACGCQNNRTESGACLDPDTPHLASVVSPPTKKGTVLPPLVQCTRHMCPIRVHWHVKQNYKEYWRVKITITNFNYRLNYTQWNLVAQHPNLDNITQIFSFNYKSLTPYAGLNDTAMLWGVKFYNDFLSEAGPLGNVQSEILFRKDQSTFTFEKGWAFPRRIYFNGDNCVMPPPDSYPFLPNGGSRSQFSFVAAVLLPLLVFFFFSA</sequence>
<name>COBRA_ARATH</name>
<gene>
    <name type="primary">COB</name>
    <name type="ordered locus">At5g60920</name>
    <name type="ORF">MSL3.40</name>
</gene>
<protein>
    <recommendedName>
        <fullName>Protein COBRA</fullName>
    </recommendedName>
    <alternativeName>
        <fullName>Cell expansion protein</fullName>
    </alternativeName>
</protein>
<keyword id="KW-1003">Cell membrane</keyword>
<keyword id="KW-0325">Glycoprotein</keyword>
<keyword id="KW-0336">GPI-anchor</keyword>
<keyword id="KW-0449">Lipoprotein</keyword>
<keyword id="KW-0472">Membrane</keyword>
<keyword id="KW-1185">Reference proteome</keyword>
<keyword id="KW-0732">Signal</keyword>
<reference key="1">
    <citation type="journal article" date="2001" name="Genes Dev.">
        <title>COBRA encodes a putative GPI-anchored protein, which is polarly localized and necessary for oriented cell expansion in Arabidopsis.</title>
        <authorList>
            <person name="Schindelman G."/>
            <person name="Morikami A."/>
            <person name="Jung J."/>
            <person name="Baskin T.I."/>
            <person name="Carpita N.C."/>
            <person name="Derbyshire P."/>
            <person name="McCann M.C."/>
            <person name="Benfey P.N."/>
        </authorList>
    </citation>
    <scope>NUCLEOTIDE SEQUENCE [GENOMIC DNA]</scope>
    <scope>TISSUE SPECIFICITY</scope>
    <scope>SUBCELLULAR LOCATION</scope>
</reference>
<reference key="2">
    <citation type="journal article" date="1997" name="DNA Res.">
        <title>Structural analysis of Arabidopsis thaliana chromosome 5. III. Sequence features of the regions of 1,191,918 bp covered by seventeen physically assigned P1 clones.</title>
        <authorList>
            <person name="Nakamura Y."/>
            <person name="Sato S."/>
            <person name="Kaneko T."/>
            <person name="Kotani H."/>
            <person name="Asamizu E."/>
            <person name="Miyajima N."/>
            <person name="Tabata S."/>
        </authorList>
    </citation>
    <scope>NUCLEOTIDE SEQUENCE [LARGE SCALE GENOMIC DNA]</scope>
    <source>
        <strain>cv. Columbia</strain>
    </source>
</reference>
<reference key="3">
    <citation type="journal article" date="2017" name="Plant J.">
        <title>Araport11: a complete reannotation of the Arabidopsis thaliana reference genome.</title>
        <authorList>
            <person name="Cheng C.Y."/>
            <person name="Krishnakumar V."/>
            <person name="Chan A.P."/>
            <person name="Thibaud-Nissen F."/>
            <person name="Schobel S."/>
            <person name="Town C.D."/>
        </authorList>
    </citation>
    <scope>GENOME REANNOTATION</scope>
    <source>
        <strain>cv. Columbia</strain>
    </source>
</reference>
<reference key="4">
    <citation type="journal article" date="2003" name="Science">
        <title>Empirical analysis of transcriptional activity in the Arabidopsis genome.</title>
        <authorList>
            <person name="Yamada K."/>
            <person name="Lim J."/>
            <person name="Dale J.M."/>
            <person name="Chen H."/>
            <person name="Shinn P."/>
            <person name="Palm C.J."/>
            <person name="Southwick A.M."/>
            <person name="Wu H.C."/>
            <person name="Kim C.J."/>
            <person name="Nguyen M."/>
            <person name="Pham P.K."/>
            <person name="Cheuk R.F."/>
            <person name="Karlin-Newmann G."/>
            <person name="Liu S.X."/>
            <person name="Lam B."/>
            <person name="Sakano H."/>
            <person name="Wu T."/>
            <person name="Yu G."/>
            <person name="Miranda M."/>
            <person name="Quach H.L."/>
            <person name="Tripp M."/>
            <person name="Chang C.H."/>
            <person name="Lee J.M."/>
            <person name="Toriumi M.J."/>
            <person name="Chan M.M."/>
            <person name="Tang C.C."/>
            <person name="Onodera C.S."/>
            <person name="Deng J.M."/>
            <person name="Akiyama K."/>
            <person name="Ansari Y."/>
            <person name="Arakawa T."/>
            <person name="Banh J."/>
            <person name="Banno F."/>
            <person name="Bowser L."/>
            <person name="Brooks S.Y."/>
            <person name="Carninci P."/>
            <person name="Chao Q."/>
            <person name="Choy N."/>
            <person name="Enju A."/>
            <person name="Goldsmith A.D."/>
            <person name="Gurjal M."/>
            <person name="Hansen N.F."/>
            <person name="Hayashizaki Y."/>
            <person name="Johnson-Hopson C."/>
            <person name="Hsuan V.W."/>
            <person name="Iida K."/>
            <person name="Karnes M."/>
            <person name="Khan S."/>
            <person name="Koesema E."/>
            <person name="Ishida J."/>
            <person name="Jiang P.X."/>
            <person name="Jones T."/>
            <person name="Kawai J."/>
            <person name="Kamiya A."/>
            <person name="Meyers C."/>
            <person name="Nakajima M."/>
            <person name="Narusaka M."/>
            <person name="Seki M."/>
            <person name="Sakurai T."/>
            <person name="Satou M."/>
            <person name="Tamse R."/>
            <person name="Vaysberg M."/>
            <person name="Wallender E.K."/>
            <person name="Wong C."/>
            <person name="Yamamura Y."/>
            <person name="Yuan S."/>
            <person name="Shinozaki K."/>
            <person name="Davis R.W."/>
            <person name="Theologis A."/>
            <person name="Ecker J.R."/>
        </authorList>
    </citation>
    <scope>NUCLEOTIDE SEQUENCE [LARGE SCALE MRNA]</scope>
    <source>
        <strain>cv. Columbia</strain>
    </source>
</reference>
<reference key="5">
    <citation type="submission" date="2002-03" db="EMBL/GenBank/DDBJ databases">
        <title>Full-length cDNA from Arabidopsis thaliana.</title>
        <authorList>
            <person name="Brover V.V."/>
            <person name="Troukhan M.E."/>
            <person name="Alexandrov N.A."/>
            <person name="Lu Y.-P."/>
            <person name="Flavell R.B."/>
            <person name="Feldmann K.A."/>
        </authorList>
    </citation>
    <scope>NUCLEOTIDE SEQUENCE [LARGE SCALE MRNA]</scope>
</reference>
<reference key="6">
    <citation type="online journal article" date="1998" name="Plant Gene Register">
        <title>Isolation of an Arabidopsis thaliana cDNA complementing a Schizosaccharomyces pombe mutant which is deficient in phytochelatin synthesis.</title>
        <authorList>
            <person name="Leuchter R."/>
            <person name="Wolf K."/>
            <person name="Zimmermann M."/>
        </authorList>
        <locator>PGR98-147</locator>
    </citation>
    <scope>NUCLEOTIDE SEQUENCE [MRNA] OF 62-456</scope>
</reference>
<reference key="7">
    <citation type="journal article" date="2002" name="Plant Physiol.">
        <title>The COBRA family of putative GPI-anchored proteins in Arabidopsis. A new fellowship in expansion.</title>
        <authorList>
            <person name="Roudier F."/>
            <person name="Schindelman G."/>
            <person name="DeSalle R."/>
            <person name="Benfey P.N."/>
        </authorList>
    </citation>
    <scope>TISSUE SPECIFICITY</scope>
</reference>
<organism>
    <name type="scientific">Arabidopsis thaliana</name>
    <name type="common">Mouse-ear cress</name>
    <dbReference type="NCBI Taxonomy" id="3702"/>
    <lineage>
        <taxon>Eukaryota</taxon>
        <taxon>Viridiplantae</taxon>
        <taxon>Streptophyta</taxon>
        <taxon>Embryophyta</taxon>
        <taxon>Tracheophyta</taxon>
        <taxon>Spermatophyta</taxon>
        <taxon>Magnoliopsida</taxon>
        <taxon>eudicotyledons</taxon>
        <taxon>Gunneridae</taxon>
        <taxon>Pentapetalae</taxon>
        <taxon>rosids</taxon>
        <taxon>malvids</taxon>
        <taxon>Brassicales</taxon>
        <taxon>Brassicaceae</taxon>
        <taxon>Camelineae</taxon>
        <taxon>Arabidopsis</taxon>
    </lineage>
</organism>
<feature type="signal peptide" evidence="1">
    <location>
        <begin position="1"/>
        <end position="36"/>
    </location>
</feature>
<feature type="chain" id="PRO_0000005570" description="Protein COBRA">
    <location>
        <begin position="37"/>
        <end position="431"/>
    </location>
</feature>
<feature type="propeptide" id="PRO_0000005571" description="Removed in mature form" evidence="1">
    <location>
        <begin position="432"/>
        <end position="456"/>
    </location>
</feature>
<feature type="lipid moiety-binding region" description="GPI-anchor amidated asparagine" evidence="1">
    <location>
        <position position="431"/>
    </location>
</feature>
<feature type="glycosylation site" description="N-linked (GlcNAc...) asparagine" evidence="1">
    <location>
        <position position="45"/>
    </location>
</feature>
<feature type="glycosylation site" description="N-linked (GlcNAc...) asparagine" evidence="1">
    <location>
        <position position="170"/>
    </location>
</feature>
<feature type="glycosylation site" description="N-linked (GlcNAc...) asparagine" evidence="1">
    <location>
        <position position="178"/>
    </location>
</feature>
<feature type="glycosylation site" description="N-linked (GlcNAc...) asparagine" evidence="1">
    <location>
        <position position="217"/>
    </location>
</feature>
<feature type="glycosylation site" description="N-linked (GlcNAc...) asparagine" evidence="1">
    <location>
        <position position="242"/>
    </location>
</feature>
<feature type="glycosylation site" description="N-linked (GlcNAc...) asparagine" evidence="1">
    <location>
        <position position="258"/>
    </location>
</feature>
<feature type="glycosylation site" description="N-linked (GlcNAc...) asparagine" evidence="1">
    <location>
        <position position="328"/>
    </location>
</feature>
<feature type="glycosylation site" description="N-linked (GlcNAc...) asparagine" evidence="1">
    <location>
        <position position="343"/>
    </location>
</feature>
<feature type="glycosylation site" description="N-linked (GlcNAc...) asparagine" evidence="1">
    <location>
        <position position="362"/>
    </location>
</feature>
<proteinExistence type="evidence at transcript level"/>
<accession>Q94KT8</accession>
<accession>O81811</accession>
<accession>Q8LDZ4</accession>
<evidence type="ECO:0000255" key="1"/>
<evidence type="ECO:0000269" key="2">
    <source>
    </source>
</evidence>
<evidence type="ECO:0000269" key="3">
    <source>
    </source>
</evidence>
<evidence type="ECO:0000305" key="4"/>
<evidence type="ECO:0000305" key="5">
    <source>
    </source>
</evidence>
<dbReference type="EMBL" id="AF319663">
    <property type="protein sequence ID" value="AAK56072.1"/>
    <property type="molecule type" value="Genomic_DNA"/>
</dbReference>
<dbReference type="EMBL" id="AB008269">
    <property type="protein sequence ID" value="BAB10641.1"/>
    <property type="status" value="ALT_SEQ"/>
    <property type="molecule type" value="Genomic_DNA"/>
</dbReference>
<dbReference type="EMBL" id="CP002688">
    <property type="protein sequence ID" value="AED97397.1"/>
    <property type="molecule type" value="Genomic_DNA"/>
</dbReference>
<dbReference type="EMBL" id="AY094402">
    <property type="protein sequence ID" value="AAM19781.1"/>
    <property type="molecule type" value="mRNA"/>
</dbReference>
<dbReference type="EMBL" id="BT001119">
    <property type="protein sequence ID" value="AAN64510.1"/>
    <property type="molecule type" value="mRNA"/>
</dbReference>
<dbReference type="EMBL" id="AY085712">
    <property type="protein sequence ID" value="AAM62930.1"/>
    <property type="molecule type" value="mRNA"/>
</dbReference>
<dbReference type="EMBL" id="AJ006787">
    <property type="protein sequence ID" value="CAA07251.1"/>
    <property type="status" value="ALT_INIT"/>
    <property type="molecule type" value="mRNA"/>
</dbReference>
<dbReference type="PIR" id="T52038">
    <property type="entry name" value="T52038"/>
</dbReference>
<dbReference type="RefSeq" id="NP_568930.1">
    <property type="nucleotide sequence ID" value="NM_125485.4"/>
</dbReference>
<dbReference type="BioGRID" id="21457">
    <property type="interactions" value="1"/>
</dbReference>
<dbReference type="FunCoup" id="Q94KT8">
    <property type="interactions" value="984"/>
</dbReference>
<dbReference type="STRING" id="3702.Q94KT8"/>
<dbReference type="GlyCosmos" id="Q94KT8">
    <property type="glycosylation" value="9 sites, No reported glycans"/>
</dbReference>
<dbReference type="GlyGen" id="Q94KT8">
    <property type="glycosylation" value="9 sites"/>
</dbReference>
<dbReference type="PaxDb" id="3702-AT5G60920.1"/>
<dbReference type="ProteomicsDB" id="241141"/>
<dbReference type="EnsemblPlants" id="AT5G60920.1">
    <property type="protein sequence ID" value="AT5G60920.1"/>
    <property type="gene ID" value="AT5G60920"/>
</dbReference>
<dbReference type="GeneID" id="836213"/>
<dbReference type="Gramene" id="AT5G60920.1">
    <property type="protein sequence ID" value="AT5G60920.1"/>
    <property type="gene ID" value="AT5G60920"/>
</dbReference>
<dbReference type="KEGG" id="ath:AT5G60920"/>
<dbReference type="Araport" id="AT5G60920"/>
<dbReference type="TAIR" id="AT5G60920">
    <property type="gene designation" value="COB"/>
</dbReference>
<dbReference type="eggNOG" id="ENOG502QTGW">
    <property type="taxonomic scope" value="Eukaryota"/>
</dbReference>
<dbReference type="HOGENOM" id="CLU_038120_0_0_1"/>
<dbReference type="InParanoid" id="Q94KT8"/>
<dbReference type="OMA" id="DIHRPIG"/>
<dbReference type="OrthoDB" id="2012261at2759"/>
<dbReference type="PhylomeDB" id="Q94KT8"/>
<dbReference type="PRO" id="PR:Q94KT8"/>
<dbReference type="Proteomes" id="UP000006548">
    <property type="component" value="Chromosome 5"/>
</dbReference>
<dbReference type="ExpressionAtlas" id="Q94KT8">
    <property type="expression patterns" value="baseline and differential"/>
</dbReference>
<dbReference type="GO" id="GO:0009897">
    <property type="term" value="C:external side of plasma membrane"/>
    <property type="evidence" value="ECO:0000250"/>
    <property type="project" value="TAIR"/>
</dbReference>
<dbReference type="GO" id="GO:0016328">
    <property type="term" value="C:lateral plasma membrane"/>
    <property type="evidence" value="ECO:0007669"/>
    <property type="project" value="UniProtKB-SubCell"/>
</dbReference>
<dbReference type="GO" id="GO:0009930">
    <property type="term" value="C:longitudinal side of cell surface"/>
    <property type="evidence" value="ECO:0000314"/>
    <property type="project" value="TAIR"/>
</dbReference>
<dbReference type="GO" id="GO:0009505">
    <property type="term" value="C:plant-type cell wall"/>
    <property type="evidence" value="ECO:0000314"/>
    <property type="project" value="TAIR"/>
</dbReference>
<dbReference type="GO" id="GO:0010215">
    <property type="term" value="P:cellulose microfibril organization"/>
    <property type="evidence" value="ECO:0000315"/>
    <property type="project" value="TAIR"/>
</dbReference>
<dbReference type="GO" id="GO:0009825">
    <property type="term" value="P:multidimensional cell growth"/>
    <property type="evidence" value="ECO:0000315"/>
    <property type="project" value="TAIR"/>
</dbReference>
<dbReference type="GO" id="GO:0009651">
    <property type="term" value="P:response to salt stress"/>
    <property type="evidence" value="ECO:0000315"/>
    <property type="project" value="TAIR"/>
</dbReference>
<dbReference type="InterPro" id="IPR056900">
    <property type="entry name" value="COB_C"/>
</dbReference>
<dbReference type="InterPro" id="IPR006918">
    <property type="entry name" value="COBRA_pln"/>
</dbReference>
<dbReference type="PANTHER" id="PTHR31673">
    <property type="entry name" value="PROTEIN COBRA"/>
    <property type="match status" value="1"/>
</dbReference>
<dbReference type="PANTHER" id="PTHR31673:SF61">
    <property type="entry name" value="PROTEIN COBRA"/>
    <property type="match status" value="1"/>
</dbReference>
<dbReference type="Pfam" id="PF25079">
    <property type="entry name" value="COB_C"/>
    <property type="match status" value="1"/>
</dbReference>
<dbReference type="Pfam" id="PF04833">
    <property type="entry name" value="COBRA"/>
    <property type="match status" value="1"/>
</dbReference>
<dbReference type="PIRSF" id="PIRSF038122">
    <property type="entry name" value="COBRA"/>
    <property type="match status" value="1"/>
</dbReference>